<gene>
    <name evidence="1" type="primary">dapB</name>
    <name type="ordered locus">NGO_1781</name>
</gene>
<proteinExistence type="evidence at protein level"/>
<feature type="chain" id="PRO_0000228364" description="4-hydroxy-tetrahydrodipicolinate reductase">
    <location>
        <begin position="1"/>
        <end position="269"/>
    </location>
</feature>
<feature type="active site" description="Proton donor/acceptor" evidence="1">
    <location>
        <position position="156"/>
    </location>
</feature>
<feature type="active site" description="Proton donor" evidence="1">
    <location>
        <position position="160"/>
    </location>
</feature>
<feature type="binding site" evidence="1">
    <location>
        <begin position="10"/>
        <end position="15"/>
    </location>
    <ligand>
        <name>NAD(+)</name>
        <dbReference type="ChEBI" id="CHEBI:57540"/>
    </ligand>
</feature>
<feature type="binding site" evidence="1">
    <location>
        <position position="36"/>
    </location>
    <ligand>
        <name>NAD(+)</name>
        <dbReference type="ChEBI" id="CHEBI:57540"/>
    </ligand>
</feature>
<feature type="binding site" evidence="1">
    <location>
        <begin position="99"/>
        <end position="101"/>
    </location>
    <ligand>
        <name>NAD(+)</name>
        <dbReference type="ChEBI" id="CHEBI:57540"/>
    </ligand>
</feature>
<feature type="binding site" evidence="1">
    <location>
        <begin position="123"/>
        <end position="126"/>
    </location>
    <ligand>
        <name>NAD(+)</name>
        <dbReference type="ChEBI" id="CHEBI:57540"/>
    </ligand>
</feature>
<feature type="binding site" evidence="1">
    <location>
        <position position="157"/>
    </location>
    <ligand>
        <name>(S)-2,3,4,5-tetrahydrodipicolinate</name>
        <dbReference type="ChEBI" id="CHEBI:16845"/>
    </ligand>
</feature>
<feature type="binding site" evidence="1">
    <location>
        <begin position="166"/>
        <end position="167"/>
    </location>
    <ligand>
        <name>(S)-2,3,4,5-tetrahydrodipicolinate</name>
        <dbReference type="ChEBI" id="CHEBI:16845"/>
    </ligand>
</feature>
<feature type="strand" evidence="3">
    <location>
        <begin position="2"/>
        <end position="10"/>
    </location>
</feature>
<feature type="helix" evidence="3">
    <location>
        <begin position="14"/>
        <end position="25"/>
    </location>
</feature>
<feature type="strand" evidence="3">
    <location>
        <begin position="29"/>
        <end position="35"/>
    </location>
</feature>
<feature type="turn" evidence="3">
    <location>
        <begin position="41"/>
        <end position="44"/>
    </location>
</feature>
<feature type="turn" evidence="3">
    <location>
        <begin position="47"/>
        <end position="52"/>
    </location>
</feature>
<feature type="helix" evidence="3">
    <location>
        <begin position="63"/>
        <end position="68"/>
    </location>
</feature>
<feature type="strand" evidence="3">
    <location>
        <begin position="71"/>
        <end position="75"/>
    </location>
</feature>
<feature type="helix" evidence="3">
    <location>
        <begin position="79"/>
        <end position="92"/>
    </location>
</feature>
<feature type="strand" evidence="3">
    <location>
        <begin position="95"/>
        <end position="98"/>
    </location>
</feature>
<feature type="helix" evidence="3">
    <location>
        <begin position="105"/>
        <end position="114"/>
    </location>
</feature>
<feature type="turn" evidence="3">
    <location>
        <begin position="115"/>
        <end position="117"/>
    </location>
</feature>
<feature type="strand" evidence="3">
    <location>
        <begin position="118"/>
        <end position="122"/>
    </location>
</feature>
<feature type="helix" evidence="3">
    <location>
        <begin position="128"/>
        <end position="143"/>
    </location>
</feature>
<feature type="strand" evidence="3">
    <location>
        <begin position="149"/>
        <end position="156"/>
    </location>
</feature>
<feature type="helix" evidence="3">
    <location>
        <begin position="166"/>
        <end position="178"/>
    </location>
</feature>
<feature type="strand" evidence="3">
    <location>
        <begin position="202"/>
        <end position="209"/>
    </location>
</feature>
<feature type="strand" evidence="3">
    <location>
        <begin position="215"/>
        <end position="223"/>
    </location>
</feature>
<feature type="strand" evidence="3">
    <location>
        <begin position="226"/>
        <end position="234"/>
    </location>
</feature>
<feature type="helix" evidence="3">
    <location>
        <begin position="238"/>
        <end position="251"/>
    </location>
</feature>
<feature type="strand" evidence="3">
    <location>
        <begin position="256"/>
        <end position="258"/>
    </location>
</feature>
<feature type="helix" evidence="3">
    <location>
        <begin position="260"/>
        <end position="264"/>
    </location>
</feature>
<sequence>MIPLKIAIAGANGRMGRVLVEAVNNHPDTVLSGALEHSGSEALGLDAGYAVGLKTGIAISDDVDAVLAQSDVLIDFTRPEPTLKHLQKCVEKQVNIIIGTTGFDDAGKAAIRAAAEKTGIVFAANFSVGVNLTFHILDTVARVLNEGYDIEIIEGHHRHKVDAPSGTALRMGEVIAGALGRDLKQCAVYGREGHTGPRDPSTIGFATVRAGDIVGDHTALFATDGERVEITHKAGSRMTFAAGAVRAAVWVNGKTGLYDMQDVLGLNNR</sequence>
<accession>Q5F5Y7</accession>
<name>DAPB_NEIG1</name>
<keyword id="KW-0002">3D-structure</keyword>
<keyword id="KW-0028">Amino-acid biosynthesis</keyword>
<keyword id="KW-0963">Cytoplasm</keyword>
<keyword id="KW-0220">Diaminopimelate biosynthesis</keyword>
<keyword id="KW-0457">Lysine biosynthesis</keyword>
<keyword id="KW-0520">NAD</keyword>
<keyword id="KW-0521">NADP</keyword>
<keyword id="KW-0560">Oxidoreductase</keyword>
<keyword id="KW-1185">Reference proteome</keyword>
<reference key="1">
    <citation type="submission" date="2003-03" db="EMBL/GenBank/DDBJ databases">
        <title>The complete genome sequence of Neisseria gonorrhoeae.</title>
        <authorList>
            <person name="Lewis L.A."/>
            <person name="Gillaspy A.F."/>
            <person name="McLaughlin R.E."/>
            <person name="Gipson M."/>
            <person name="Ducey T.F."/>
            <person name="Ownbey T."/>
            <person name="Hartman K."/>
            <person name="Nydick C."/>
            <person name="Carson M.B."/>
            <person name="Vaughn J."/>
            <person name="Thomson C."/>
            <person name="Song L."/>
            <person name="Lin S."/>
            <person name="Yuan X."/>
            <person name="Najar F."/>
            <person name="Zhan M."/>
            <person name="Ren Q."/>
            <person name="Zhu H."/>
            <person name="Qi S."/>
            <person name="Kenton S.M."/>
            <person name="Lai H."/>
            <person name="White J.D."/>
            <person name="Clifton S."/>
            <person name="Roe B.A."/>
            <person name="Dyer D.W."/>
        </authorList>
    </citation>
    <scope>NUCLEOTIDE SEQUENCE [LARGE SCALE GENOMIC DNA]</scope>
    <source>
        <strain>ATCC 700825 / FA 1090</strain>
    </source>
</reference>
<comment type="function">
    <text evidence="1">Catalyzes the conversion of 4-hydroxy-tetrahydrodipicolinate (HTPA) to tetrahydrodipicolinate.</text>
</comment>
<comment type="catalytic activity">
    <reaction evidence="1">
        <text>(S)-2,3,4,5-tetrahydrodipicolinate + NAD(+) + H2O = (2S,4S)-4-hydroxy-2,3,4,5-tetrahydrodipicolinate + NADH + H(+)</text>
        <dbReference type="Rhea" id="RHEA:35323"/>
        <dbReference type="ChEBI" id="CHEBI:15377"/>
        <dbReference type="ChEBI" id="CHEBI:15378"/>
        <dbReference type="ChEBI" id="CHEBI:16845"/>
        <dbReference type="ChEBI" id="CHEBI:57540"/>
        <dbReference type="ChEBI" id="CHEBI:57945"/>
        <dbReference type="ChEBI" id="CHEBI:67139"/>
        <dbReference type="EC" id="1.17.1.8"/>
    </reaction>
</comment>
<comment type="catalytic activity">
    <reaction evidence="1">
        <text>(S)-2,3,4,5-tetrahydrodipicolinate + NADP(+) + H2O = (2S,4S)-4-hydroxy-2,3,4,5-tetrahydrodipicolinate + NADPH + H(+)</text>
        <dbReference type="Rhea" id="RHEA:35331"/>
        <dbReference type="ChEBI" id="CHEBI:15377"/>
        <dbReference type="ChEBI" id="CHEBI:15378"/>
        <dbReference type="ChEBI" id="CHEBI:16845"/>
        <dbReference type="ChEBI" id="CHEBI:57783"/>
        <dbReference type="ChEBI" id="CHEBI:58349"/>
        <dbReference type="ChEBI" id="CHEBI:67139"/>
        <dbReference type="EC" id="1.17.1.8"/>
    </reaction>
</comment>
<comment type="pathway">
    <text evidence="1">Amino-acid biosynthesis; L-lysine biosynthesis via DAP pathway; (S)-tetrahydrodipicolinate from L-aspartate: step 4/4.</text>
</comment>
<comment type="subcellular location">
    <subcellularLocation>
        <location evidence="1">Cytoplasm</location>
    </subcellularLocation>
</comment>
<comment type="similarity">
    <text evidence="1">Belongs to the DapB family.</text>
</comment>
<comment type="caution">
    <text evidence="2">Was originally thought to be a dihydrodipicolinate reductase (DHDPR), catalyzing the conversion of dihydrodipicolinate to tetrahydrodipicolinate. However, it was shown in E.coli that the substrate of the enzymatic reaction is not dihydrodipicolinate (DHDP) but in fact (2S,4S)-4-hydroxy-2,3,4,5-tetrahydrodipicolinic acid (HTPA), the product released by the DapA-catalyzed reaction.</text>
</comment>
<evidence type="ECO:0000255" key="1">
    <source>
        <dbReference type="HAMAP-Rule" id="MF_00102"/>
    </source>
</evidence>
<evidence type="ECO:0000305" key="2"/>
<evidence type="ECO:0007829" key="3">
    <source>
        <dbReference type="PDB" id="6BDX"/>
    </source>
</evidence>
<dbReference type="EC" id="1.17.1.8" evidence="1"/>
<dbReference type="EMBL" id="AE004969">
    <property type="protein sequence ID" value="AAW90400.1"/>
    <property type="molecule type" value="Genomic_DNA"/>
</dbReference>
<dbReference type="RefSeq" id="WP_003689993.1">
    <property type="nucleotide sequence ID" value="NC_002946.2"/>
</dbReference>
<dbReference type="RefSeq" id="YP_208812.1">
    <property type="nucleotide sequence ID" value="NC_002946.2"/>
</dbReference>
<dbReference type="PDB" id="6BDX">
    <property type="method" value="X-ray"/>
    <property type="resolution" value="1.85 A"/>
    <property type="chains" value="A=1-269"/>
</dbReference>
<dbReference type="PDBsum" id="6BDX"/>
<dbReference type="SMR" id="Q5F5Y7"/>
<dbReference type="STRING" id="242231.NGO_1781"/>
<dbReference type="GeneID" id="66754361"/>
<dbReference type="KEGG" id="ngo:NGO_1781"/>
<dbReference type="PATRIC" id="fig|242231.10.peg.2138"/>
<dbReference type="HOGENOM" id="CLU_047479_2_1_4"/>
<dbReference type="UniPathway" id="UPA00034">
    <property type="reaction ID" value="UER00018"/>
</dbReference>
<dbReference type="Proteomes" id="UP000000535">
    <property type="component" value="Chromosome"/>
</dbReference>
<dbReference type="GO" id="GO:0005829">
    <property type="term" value="C:cytosol"/>
    <property type="evidence" value="ECO:0007669"/>
    <property type="project" value="TreeGrafter"/>
</dbReference>
<dbReference type="GO" id="GO:0008839">
    <property type="term" value="F:4-hydroxy-tetrahydrodipicolinate reductase"/>
    <property type="evidence" value="ECO:0007669"/>
    <property type="project" value="UniProtKB-EC"/>
</dbReference>
<dbReference type="GO" id="GO:0051287">
    <property type="term" value="F:NAD binding"/>
    <property type="evidence" value="ECO:0007669"/>
    <property type="project" value="UniProtKB-UniRule"/>
</dbReference>
<dbReference type="GO" id="GO:0050661">
    <property type="term" value="F:NADP binding"/>
    <property type="evidence" value="ECO:0007669"/>
    <property type="project" value="UniProtKB-UniRule"/>
</dbReference>
<dbReference type="GO" id="GO:0016726">
    <property type="term" value="F:oxidoreductase activity, acting on CH or CH2 groups, NAD or NADP as acceptor"/>
    <property type="evidence" value="ECO:0007669"/>
    <property type="project" value="UniProtKB-UniRule"/>
</dbReference>
<dbReference type="GO" id="GO:0019877">
    <property type="term" value="P:diaminopimelate biosynthetic process"/>
    <property type="evidence" value="ECO:0007669"/>
    <property type="project" value="UniProtKB-UniRule"/>
</dbReference>
<dbReference type="GO" id="GO:0009089">
    <property type="term" value="P:lysine biosynthetic process via diaminopimelate"/>
    <property type="evidence" value="ECO:0007669"/>
    <property type="project" value="UniProtKB-UniRule"/>
</dbReference>
<dbReference type="CDD" id="cd02274">
    <property type="entry name" value="DHDPR_N"/>
    <property type="match status" value="1"/>
</dbReference>
<dbReference type="FunFam" id="3.30.360.10:FF:000004">
    <property type="entry name" value="4-hydroxy-tetrahydrodipicolinate reductase"/>
    <property type="match status" value="1"/>
</dbReference>
<dbReference type="FunFam" id="3.40.50.720:FF:000048">
    <property type="entry name" value="4-hydroxy-tetrahydrodipicolinate reductase"/>
    <property type="match status" value="1"/>
</dbReference>
<dbReference type="Gene3D" id="3.30.360.10">
    <property type="entry name" value="Dihydrodipicolinate Reductase, domain 2"/>
    <property type="match status" value="1"/>
</dbReference>
<dbReference type="Gene3D" id="3.40.50.720">
    <property type="entry name" value="NAD(P)-binding Rossmann-like Domain"/>
    <property type="match status" value="1"/>
</dbReference>
<dbReference type="HAMAP" id="MF_00102">
    <property type="entry name" value="DapB"/>
    <property type="match status" value="1"/>
</dbReference>
<dbReference type="InterPro" id="IPR022663">
    <property type="entry name" value="DapB_C"/>
</dbReference>
<dbReference type="InterPro" id="IPR000846">
    <property type="entry name" value="DapB_N"/>
</dbReference>
<dbReference type="InterPro" id="IPR022664">
    <property type="entry name" value="DapB_N_CS"/>
</dbReference>
<dbReference type="InterPro" id="IPR023940">
    <property type="entry name" value="DHDPR_bac"/>
</dbReference>
<dbReference type="InterPro" id="IPR036291">
    <property type="entry name" value="NAD(P)-bd_dom_sf"/>
</dbReference>
<dbReference type="NCBIfam" id="TIGR00036">
    <property type="entry name" value="dapB"/>
    <property type="match status" value="1"/>
</dbReference>
<dbReference type="PANTHER" id="PTHR20836:SF0">
    <property type="entry name" value="4-HYDROXY-TETRAHYDRODIPICOLINATE REDUCTASE 1, CHLOROPLASTIC-RELATED"/>
    <property type="match status" value="1"/>
</dbReference>
<dbReference type="PANTHER" id="PTHR20836">
    <property type="entry name" value="DIHYDRODIPICOLINATE REDUCTASE"/>
    <property type="match status" value="1"/>
</dbReference>
<dbReference type="Pfam" id="PF05173">
    <property type="entry name" value="DapB_C"/>
    <property type="match status" value="1"/>
</dbReference>
<dbReference type="Pfam" id="PF01113">
    <property type="entry name" value="DapB_N"/>
    <property type="match status" value="1"/>
</dbReference>
<dbReference type="PIRSF" id="PIRSF000161">
    <property type="entry name" value="DHPR"/>
    <property type="match status" value="1"/>
</dbReference>
<dbReference type="SUPFAM" id="SSF55347">
    <property type="entry name" value="Glyceraldehyde-3-phosphate dehydrogenase-like, C-terminal domain"/>
    <property type="match status" value="1"/>
</dbReference>
<dbReference type="SUPFAM" id="SSF51735">
    <property type="entry name" value="NAD(P)-binding Rossmann-fold domains"/>
    <property type="match status" value="1"/>
</dbReference>
<dbReference type="PROSITE" id="PS01298">
    <property type="entry name" value="DAPB"/>
    <property type="match status" value="1"/>
</dbReference>
<protein>
    <recommendedName>
        <fullName evidence="1">4-hydroxy-tetrahydrodipicolinate reductase</fullName>
        <shortName evidence="1">HTPA reductase</shortName>
        <ecNumber evidence="1">1.17.1.8</ecNumber>
    </recommendedName>
</protein>
<organism>
    <name type="scientific">Neisseria gonorrhoeae (strain ATCC 700825 / FA 1090)</name>
    <dbReference type="NCBI Taxonomy" id="242231"/>
    <lineage>
        <taxon>Bacteria</taxon>
        <taxon>Pseudomonadati</taxon>
        <taxon>Pseudomonadota</taxon>
        <taxon>Betaproteobacteria</taxon>
        <taxon>Neisseriales</taxon>
        <taxon>Neisseriaceae</taxon>
        <taxon>Neisseria</taxon>
    </lineage>
</organism>